<organism>
    <name type="scientific">Francisella tularensis subsp. mediasiatica (strain FSC147)</name>
    <dbReference type="NCBI Taxonomy" id="441952"/>
    <lineage>
        <taxon>Bacteria</taxon>
        <taxon>Pseudomonadati</taxon>
        <taxon>Pseudomonadota</taxon>
        <taxon>Gammaproteobacteria</taxon>
        <taxon>Thiotrichales</taxon>
        <taxon>Francisellaceae</taxon>
        <taxon>Francisella</taxon>
    </lineage>
</organism>
<dbReference type="EMBL" id="CP000915">
    <property type="protein sequence ID" value="ACD31222.1"/>
    <property type="molecule type" value="Genomic_DNA"/>
</dbReference>
<dbReference type="SMR" id="B2SDK9"/>
<dbReference type="KEGG" id="ftm:FTM_1386"/>
<dbReference type="HOGENOM" id="CLU_148518_0_0_6"/>
<dbReference type="GO" id="GO:0022627">
    <property type="term" value="C:cytosolic small ribosomal subunit"/>
    <property type="evidence" value="ECO:0007669"/>
    <property type="project" value="TreeGrafter"/>
</dbReference>
<dbReference type="GO" id="GO:0019843">
    <property type="term" value="F:rRNA binding"/>
    <property type="evidence" value="ECO:0007669"/>
    <property type="project" value="UniProtKB-UniRule"/>
</dbReference>
<dbReference type="GO" id="GO:0003735">
    <property type="term" value="F:structural constituent of ribosome"/>
    <property type="evidence" value="ECO:0007669"/>
    <property type="project" value="InterPro"/>
</dbReference>
<dbReference type="GO" id="GO:0006412">
    <property type="term" value="P:translation"/>
    <property type="evidence" value="ECO:0007669"/>
    <property type="project" value="UniProtKB-UniRule"/>
</dbReference>
<dbReference type="CDD" id="cd00353">
    <property type="entry name" value="Ribosomal_S15p_S13e"/>
    <property type="match status" value="1"/>
</dbReference>
<dbReference type="FunFam" id="1.10.287.10:FF:000002">
    <property type="entry name" value="30S ribosomal protein S15"/>
    <property type="match status" value="1"/>
</dbReference>
<dbReference type="Gene3D" id="6.10.250.3130">
    <property type="match status" value="1"/>
</dbReference>
<dbReference type="Gene3D" id="1.10.287.10">
    <property type="entry name" value="S15/NS1, RNA-binding"/>
    <property type="match status" value="1"/>
</dbReference>
<dbReference type="HAMAP" id="MF_01343_B">
    <property type="entry name" value="Ribosomal_uS15_B"/>
    <property type="match status" value="1"/>
</dbReference>
<dbReference type="InterPro" id="IPR000589">
    <property type="entry name" value="Ribosomal_uS15"/>
</dbReference>
<dbReference type="InterPro" id="IPR005290">
    <property type="entry name" value="Ribosomal_uS15_bac-type"/>
</dbReference>
<dbReference type="InterPro" id="IPR009068">
    <property type="entry name" value="uS15_NS1_RNA-bd_sf"/>
</dbReference>
<dbReference type="NCBIfam" id="TIGR00952">
    <property type="entry name" value="S15_bact"/>
    <property type="match status" value="1"/>
</dbReference>
<dbReference type="PANTHER" id="PTHR23321">
    <property type="entry name" value="RIBOSOMAL PROTEIN S15, BACTERIAL AND ORGANELLAR"/>
    <property type="match status" value="1"/>
</dbReference>
<dbReference type="PANTHER" id="PTHR23321:SF26">
    <property type="entry name" value="SMALL RIBOSOMAL SUBUNIT PROTEIN US15M"/>
    <property type="match status" value="1"/>
</dbReference>
<dbReference type="Pfam" id="PF00312">
    <property type="entry name" value="Ribosomal_S15"/>
    <property type="match status" value="1"/>
</dbReference>
<dbReference type="SMART" id="SM01387">
    <property type="entry name" value="Ribosomal_S15"/>
    <property type="match status" value="1"/>
</dbReference>
<dbReference type="SUPFAM" id="SSF47060">
    <property type="entry name" value="S15/NS1 RNA-binding domain"/>
    <property type="match status" value="1"/>
</dbReference>
<dbReference type="PROSITE" id="PS00362">
    <property type="entry name" value="RIBOSOMAL_S15"/>
    <property type="match status" value="1"/>
</dbReference>
<sequence>MLTAQDKQKIIKENQLAESDTGSPEVQVALLTARINDLQGHFEAHKKDNHSRRGLLRLVSQRRKLLDYLHDKDVERYRSLIKKLNIRR</sequence>
<accession>B2SDK9</accession>
<feature type="chain" id="PRO_1000143120" description="Small ribosomal subunit protein uS15">
    <location>
        <begin position="1"/>
        <end position="88"/>
    </location>
</feature>
<evidence type="ECO:0000255" key="1">
    <source>
        <dbReference type="HAMAP-Rule" id="MF_01343"/>
    </source>
</evidence>
<evidence type="ECO:0000305" key="2"/>
<protein>
    <recommendedName>
        <fullName evidence="1">Small ribosomal subunit protein uS15</fullName>
    </recommendedName>
    <alternativeName>
        <fullName evidence="2">30S ribosomal protein S15</fullName>
    </alternativeName>
</protein>
<reference key="1">
    <citation type="journal article" date="2009" name="PLoS Pathog.">
        <title>Molecular evolutionary consequences of niche restriction in Francisella tularensis, a facultative intracellular pathogen.</title>
        <authorList>
            <person name="Larsson P."/>
            <person name="Elfsmark D."/>
            <person name="Svensson K."/>
            <person name="Wikstroem P."/>
            <person name="Forsman M."/>
            <person name="Brettin T."/>
            <person name="Keim P."/>
            <person name="Johansson A."/>
        </authorList>
    </citation>
    <scope>NUCLEOTIDE SEQUENCE [LARGE SCALE GENOMIC DNA]</scope>
    <source>
        <strain>FSC147</strain>
    </source>
</reference>
<keyword id="KW-0687">Ribonucleoprotein</keyword>
<keyword id="KW-0689">Ribosomal protein</keyword>
<keyword id="KW-0694">RNA-binding</keyword>
<keyword id="KW-0699">rRNA-binding</keyword>
<gene>
    <name evidence="1" type="primary">rpsO</name>
    <name type="ordered locus">FTM_1386</name>
</gene>
<name>RS15_FRATM</name>
<proteinExistence type="inferred from homology"/>
<comment type="function">
    <text evidence="1">One of the primary rRNA binding proteins, it binds directly to 16S rRNA where it helps nucleate assembly of the platform of the 30S subunit by binding and bridging several RNA helices of the 16S rRNA.</text>
</comment>
<comment type="function">
    <text evidence="1">Forms an intersubunit bridge (bridge B4) with the 23S rRNA of the 50S subunit in the ribosome.</text>
</comment>
<comment type="subunit">
    <text evidence="1">Part of the 30S ribosomal subunit. Forms a bridge to the 50S subunit in the 70S ribosome, contacting the 23S rRNA.</text>
</comment>
<comment type="similarity">
    <text evidence="1">Belongs to the universal ribosomal protein uS15 family.</text>
</comment>